<protein>
    <recommendedName>
        <fullName evidence="1">Aliphatic sulfonates import ATP-binding protein SsuB 1</fullName>
        <ecNumber evidence="1">7.6.2.14</ecNumber>
    </recommendedName>
</protein>
<name>SSUB1_PARDP</name>
<reference key="1">
    <citation type="submission" date="2006-12" db="EMBL/GenBank/DDBJ databases">
        <title>Complete sequence of chromosome 2 of Paracoccus denitrificans PD1222.</title>
        <authorList>
            <person name="Copeland A."/>
            <person name="Lucas S."/>
            <person name="Lapidus A."/>
            <person name="Barry K."/>
            <person name="Detter J.C."/>
            <person name="Glavina del Rio T."/>
            <person name="Hammon N."/>
            <person name="Israni S."/>
            <person name="Dalin E."/>
            <person name="Tice H."/>
            <person name="Pitluck S."/>
            <person name="Munk A.C."/>
            <person name="Brettin T."/>
            <person name="Bruce D."/>
            <person name="Han C."/>
            <person name="Tapia R."/>
            <person name="Gilna P."/>
            <person name="Schmutz J."/>
            <person name="Larimer F."/>
            <person name="Land M."/>
            <person name="Hauser L."/>
            <person name="Kyrpides N."/>
            <person name="Lykidis A."/>
            <person name="Spiro S."/>
            <person name="Richardson D.J."/>
            <person name="Moir J.W.B."/>
            <person name="Ferguson S.J."/>
            <person name="van Spanning R.J.M."/>
            <person name="Richardson P."/>
        </authorList>
    </citation>
    <scope>NUCLEOTIDE SEQUENCE [LARGE SCALE GENOMIC DNA]</scope>
    <source>
        <strain>Pd 1222</strain>
    </source>
</reference>
<feature type="chain" id="PRO_0000279925" description="Aliphatic sulfonates import ATP-binding protein SsuB 1">
    <location>
        <begin position="1"/>
        <end position="242"/>
    </location>
</feature>
<feature type="domain" description="ABC transporter" evidence="1">
    <location>
        <begin position="11"/>
        <end position="227"/>
    </location>
</feature>
<feature type="binding site" evidence="1">
    <location>
        <begin position="43"/>
        <end position="50"/>
    </location>
    <ligand>
        <name>ATP</name>
        <dbReference type="ChEBI" id="CHEBI:30616"/>
    </ligand>
</feature>
<gene>
    <name evidence="1" type="primary">ssuB1</name>
    <name type="ordered locus">Pden_4107</name>
</gene>
<comment type="function">
    <text evidence="1">Part of the ABC transporter complex SsuABC involved in aliphatic sulfonates import. Responsible for energy coupling to the transport system.</text>
</comment>
<comment type="catalytic activity">
    <reaction evidence="1">
        <text>ATP + H2O + aliphatic sulfonate-[sulfonate-binding protein]Side 1 = ADP + phosphate + aliphatic sulfonateSide 2 + [sulfonate-binding protein]Side 1.</text>
        <dbReference type="EC" id="7.6.2.14"/>
    </reaction>
</comment>
<comment type="subunit">
    <text evidence="1">The complex is composed of two ATP-binding proteins (SsuB), two transmembrane proteins (SsuC) and a solute-binding protein (SsuA).</text>
</comment>
<comment type="subcellular location">
    <subcellularLocation>
        <location evidence="1">Cell inner membrane</location>
        <topology evidence="1">Peripheral membrane protein</topology>
    </subcellularLocation>
</comment>
<comment type="similarity">
    <text evidence="1">Belongs to the ABC transporter superfamily. Aliphatic sulfonates importer (TC 3.A.1.17.2) family.</text>
</comment>
<dbReference type="EC" id="7.6.2.14" evidence="1"/>
<dbReference type="EMBL" id="CP000490">
    <property type="protein sequence ID" value="ABL72173.1"/>
    <property type="molecule type" value="Genomic_DNA"/>
</dbReference>
<dbReference type="RefSeq" id="WP_011750341.1">
    <property type="nucleotide sequence ID" value="NC_008687.1"/>
</dbReference>
<dbReference type="SMR" id="A1B9H9"/>
<dbReference type="STRING" id="318586.Pden_4107"/>
<dbReference type="EnsemblBacteria" id="ABL72173">
    <property type="protein sequence ID" value="ABL72173"/>
    <property type="gene ID" value="Pden_4107"/>
</dbReference>
<dbReference type="GeneID" id="93453774"/>
<dbReference type="KEGG" id="pde:Pden_4107"/>
<dbReference type="eggNOG" id="COG1116">
    <property type="taxonomic scope" value="Bacteria"/>
</dbReference>
<dbReference type="HOGENOM" id="CLU_000604_1_22_5"/>
<dbReference type="OrthoDB" id="9802264at2"/>
<dbReference type="Proteomes" id="UP000000361">
    <property type="component" value="Chromosome 2"/>
</dbReference>
<dbReference type="GO" id="GO:0005886">
    <property type="term" value="C:plasma membrane"/>
    <property type="evidence" value="ECO:0007669"/>
    <property type="project" value="UniProtKB-SubCell"/>
</dbReference>
<dbReference type="GO" id="GO:0005524">
    <property type="term" value="F:ATP binding"/>
    <property type="evidence" value="ECO:0007669"/>
    <property type="project" value="UniProtKB-KW"/>
</dbReference>
<dbReference type="GO" id="GO:0016887">
    <property type="term" value="F:ATP hydrolysis activity"/>
    <property type="evidence" value="ECO:0007669"/>
    <property type="project" value="InterPro"/>
</dbReference>
<dbReference type="Gene3D" id="3.40.50.300">
    <property type="entry name" value="P-loop containing nucleotide triphosphate hydrolases"/>
    <property type="match status" value="1"/>
</dbReference>
<dbReference type="InterPro" id="IPR003593">
    <property type="entry name" value="AAA+_ATPase"/>
</dbReference>
<dbReference type="InterPro" id="IPR003439">
    <property type="entry name" value="ABC_transporter-like_ATP-bd"/>
</dbReference>
<dbReference type="InterPro" id="IPR017871">
    <property type="entry name" value="ABC_transporter-like_CS"/>
</dbReference>
<dbReference type="InterPro" id="IPR050166">
    <property type="entry name" value="ABC_transporter_ATP-bind"/>
</dbReference>
<dbReference type="InterPro" id="IPR027417">
    <property type="entry name" value="P-loop_NTPase"/>
</dbReference>
<dbReference type="PANTHER" id="PTHR42788:SF17">
    <property type="entry name" value="ALIPHATIC SULFONATES IMPORT ATP-BINDING PROTEIN SSUB"/>
    <property type="match status" value="1"/>
</dbReference>
<dbReference type="PANTHER" id="PTHR42788">
    <property type="entry name" value="TAURINE IMPORT ATP-BINDING PROTEIN-RELATED"/>
    <property type="match status" value="1"/>
</dbReference>
<dbReference type="Pfam" id="PF00005">
    <property type="entry name" value="ABC_tran"/>
    <property type="match status" value="1"/>
</dbReference>
<dbReference type="SMART" id="SM00382">
    <property type="entry name" value="AAA"/>
    <property type="match status" value="1"/>
</dbReference>
<dbReference type="SUPFAM" id="SSF52540">
    <property type="entry name" value="P-loop containing nucleoside triphosphate hydrolases"/>
    <property type="match status" value="1"/>
</dbReference>
<dbReference type="PROSITE" id="PS00211">
    <property type="entry name" value="ABC_TRANSPORTER_1"/>
    <property type="match status" value="1"/>
</dbReference>
<dbReference type="PROSITE" id="PS50893">
    <property type="entry name" value="ABC_TRANSPORTER_2"/>
    <property type="match status" value="1"/>
</dbReference>
<dbReference type="PROSITE" id="PS51291">
    <property type="entry name" value="SSUB"/>
    <property type="match status" value="1"/>
</dbReference>
<keyword id="KW-0067">ATP-binding</keyword>
<keyword id="KW-0997">Cell inner membrane</keyword>
<keyword id="KW-1003">Cell membrane</keyword>
<keyword id="KW-0472">Membrane</keyword>
<keyword id="KW-0547">Nucleotide-binding</keyword>
<keyword id="KW-1185">Reference proteome</keyword>
<keyword id="KW-1278">Translocase</keyword>
<keyword id="KW-0813">Transport</keyword>
<accession>A1B9H9</accession>
<evidence type="ECO:0000255" key="1">
    <source>
        <dbReference type="HAMAP-Rule" id="MF_01724"/>
    </source>
</evidence>
<organism>
    <name type="scientific">Paracoccus denitrificans (strain Pd 1222)</name>
    <dbReference type="NCBI Taxonomy" id="318586"/>
    <lineage>
        <taxon>Bacteria</taxon>
        <taxon>Pseudomonadati</taxon>
        <taxon>Pseudomonadota</taxon>
        <taxon>Alphaproteobacteria</taxon>
        <taxon>Rhodobacterales</taxon>
        <taxon>Paracoccaceae</taxon>
        <taxon>Paracoccus</taxon>
    </lineage>
</organism>
<sequence>MTLHRAISPAVAVRRLSRAFGDRPVLHDITLNIPSGQFVALLGESGSGKTTLLRALAGLDDDARQSGSYSVPKNVSVLFQDARLLPWLSVIDNLTLGLRRQDAVQAAQSMLDSVGIGDKARAYPATLSGGQKQRAALARSLLRNPDLLLADEPFGALDALTRLKMHDLLLRLVERSRPTIVLVTHDVDEAVLLADRILVLRDGVIAEDHRVTVPHPRRPSHPDFEDLRRRLLRSLGVETEHI</sequence>
<proteinExistence type="inferred from homology"/>